<evidence type="ECO:0000255" key="1">
    <source>
        <dbReference type="HAMAP-Rule" id="MF_00003"/>
    </source>
</evidence>
<protein>
    <recommendedName>
        <fullName evidence="1">Ribosome-binding factor A</fullName>
    </recommendedName>
</protein>
<keyword id="KW-0963">Cytoplasm</keyword>
<keyword id="KW-1185">Reference proteome</keyword>
<keyword id="KW-0690">Ribosome biogenesis</keyword>
<comment type="function">
    <text evidence="1">One of several proteins that assist in the late maturation steps of the functional core of the 30S ribosomal subunit. Associates with free 30S ribosomal subunits (but not with 30S subunits that are part of 70S ribosomes or polysomes). Required for efficient processing of 16S rRNA. May interact with the 5'-terminal helix region of 16S rRNA.</text>
</comment>
<comment type="subunit">
    <text evidence="1">Monomer. Binds 30S ribosomal subunits, but not 50S ribosomal subunits or 70S ribosomes.</text>
</comment>
<comment type="subcellular location">
    <subcellularLocation>
        <location evidence="1">Cytoplasm</location>
    </subcellularLocation>
</comment>
<comment type="similarity">
    <text evidence="1">Belongs to the RbfA family.</text>
</comment>
<reference key="1">
    <citation type="journal article" date="2007" name="Curr. Biol.">
        <title>Reduced genome of the thioautotrophic intracellular symbiont in a deep-sea clam, Calyptogena okutanii.</title>
        <authorList>
            <person name="Kuwahara H."/>
            <person name="Yoshida T."/>
            <person name="Takaki Y."/>
            <person name="Shimamura S."/>
            <person name="Nishi S."/>
            <person name="Harada M."/>
            <person name="Matsuyama K."/>
            <person name="Takishita K."/>
            <person name="Kawato M."/>
            <person name="Uematsu K."/>
            <person name="Fujiwara Y."/>
            <person name="Sato T."/>
            <person name="Kato C."/>
            <person name="Kitagawa M."/>
            <person name="Kato I."/>
            <person name="Maruyama T."/>
        </authorList>
    </citation>
    <scope>NUCLEOTIDE SEQUENCE [LARGE SCALE GENOMIC DNA]</scope>
    <source>
        <strain>HA</strain>
    </source>
</reference>
<gene>
    <name evidence="1" type="primary">rbfA</name>
    <name type="ordered locus">COSY_0060</name>
</gene>
<name>RBFA_VESOH</name>
<dbReference type="EMBL" id="AP009247">
    <property type="protein sequence ID" value="BAF61197.1"/>
    <property type="molecule type" value="Genomic_DNA"/>
</dbReference>
<dbReference type="RefSeq" id="WP_011929467.1">
    <property type="nucleotide sequence ID" value="NC_009465.1"/>
</dbReference>
<dbReference type="SMR" id="A5CXX7"/>
<dbReference type="STRING" id="412965.COSY_0060"/>
<dbReference type="KEGG" id="vok:COSY_0060"/>
<dbReference type="eggNOG" id="COG0858">
    <property type="taxonomic scope" value="Bacteria"/>
</dbReference>
<dbReference type="HOGENOM" id="CLU_089475_5_1_6"/>
<dbReference type="OrthoDB" id="307788at2"/>
<dbReference type="Proteomes" id="UP000000247">
    <property type="component" value="Chromosome"/>
</dbReference>
<dbReference type="GO" id="GO:0005829">
    <property type="term" value="C:cytosol"/>
    <property type="evidence" value="ECO:0007669"/>
    <property type="project" value="TreeGrafter"/>
</dbReference>
<dbReference type="GO" id="GO:0043024">
    <property type="term" value="F:ribosomal small subunit binding"/>
    <property type="evidence" value="ECO:0007669"/>
    <property type="project" value="TreeGrafter"/>
</dbReference>
<dbReference type="GO" id="GO:0030490">
    <property type="term" value="P:maturation of SSU-rRNA"/>
    <property type="evidence" value="ECO:0007669"/>
    <property type="project" value="UniProtKB-UniRule"/>
</dbReference>
<dbReference type="Gene3D" id="3.30.300.20">
    <property type="match status" value="1"/>
</dbReference>
<dbReference type="HAMAP" id="MF_00003">
    <property type="entry name" value="RbfA"/>
    <property type="match status" value="1"/>
</dbReference>
<dbReference type="InterPro" id="IPR015946">
    <property type="entry name" value="KH_dom-like_a/b"/>
</dbReference>
<dbReference type="InterPro" id="IPR000238">
    <property type="entry name" value="RbfA"/>
</dbReference>
<dbReference type="InterPro" id="IPR023799">
    <property type="entry name" value="RbfA_dom_sf"/>
</dbReference>
<dbReference type="InterPro" id="IPR020053">
    <property type="entry name" value="Ribosome-bd_factorA_CS"/>
</dbReference>
<dbReference type="NCBIfam" id="TIGR00082">
    <property type="entry name" value="rbfA"/>
    <property type="match status" value="1"/>
</dbReference>
<dbReference type="PANTHER" id="PTHR33515">
    <property type="entry name" value="RIBOSOME-BINDING FACTOR A, CHLOROPLASTIC-RELATED"/>
    <property type="match status" value="1"/>
</dbReference>
<dbReference type="PANTHER" id="PTHR33515:SF1">
    <property type="entry name" value="RIBOSOME-BINDING FACTOR A, CHLOROPLASTIC-RELATED"/>
    <property type="match status" value="1"/>
</dbReference>
<dbReference type="Pfam" id="PF02033">
    <property type="entry name" value="RBFA"/>
    <property type="match status" value="1"/>
</dbReference>
<dbReference type="SUPFAM" id="SSF89919">
    <property type="entry name" value="Ribosome-binding factor A, RbfA"/>
    <property type="match status" value="1"/>
</dbReference>
<dbReference type="PROSITE" id="PS01319">
    <property type="entry name" value="RBFA"/>
    <property type="match status" value="1"/>
</dbReference>
<sequence>MLEQEQASYRVERINELIRRELTLLLRTSIKDPRLRDMIITDVLISRDLSSAKVFYTVIKEDKKMIEPLLDKASGFFRIHLSKTIDLRHTPVLRFIFDSAPNTGARIEQLLSKL</sequence>
<feature type="chain" id="PRO_0000321266" description="Ribosome-binding factor A">
    <location>
        <begin position="1"/>
        <end position="114"/>
    </location>
</feature>
<organism>
    <name type="scientific">Vesicomyosocius okutanii subsp. Calyptogena okutanii (strain HA)</name>
    <dbReference type="NCBI Taxonomy" id="412965"/>
    <lineage>
        <taxon>Bacteria</taxon>
        <taxon>Pseudomonadati</taxon>
        <taxon>Pseudomonadota</taxon>
        <taxon>Gammaproteobacteria</taxon>
        <taxon>Candidatus Pseudothioglobaceae</taxon>
        <taxon>Candidatus Vesicomyosocius</taxon>
    </lineage>
</organism>
<proteinExistence type="inferred from homology"/>
<accession>A5CXX7</accession>